<feature type="chain" id="PRO_0000387408" description="tRNA1(Val) (adenine(37)-N6)-methyltransferase">
    <location>
        <begin position="1"/>
        <end position="245"/>
    </location>
</feature>
<dbReference type="EC" id="2.1.1.223" evidence="1"/>
<dbReference type="EMBL" id="FM200053">
    <property type="protein sequence ID" value="CAR58376.1"/>
    <property type="molecule type" value="Genomic_DNA"/>
</dbReference>
<dbReference type="SMR" id="B5BAS2"/>
<dbReference type="KEGG" id="sek:SSPA0261"/>
<dbReference type="HOGENOM" id="CLU_061983_0_0_6"/>
<dbReference type="Proteomes" id="UP000001869">
    <property type="component" value="Chromosome"/>
</dbReference>
<dbReference type="GO" id="GO:0005737">
    <property type="term" value="C:cytoplasm"/>
    <property type="evidence" value="ECO:0007669"/>
    <property type="project" value="UniProtKB-SubCell"/>
</dbReference>
<dbReference type="GO" id="GO:0003676">
    <property type="term" value="F:nucleic acid binding"/>
    <property type="evidence" value="ECO:0007669"/>
    <property type="project" value="InterPro"/>
</dbReference>
<dbReference type="GO" id="GO:0016430">
    <property type="term" value="F:tRNA (adenine-N6)-methyltransferase activity"/>
    <property type="evidence" value="ECO:0007669"/>
    <property type="project" value="UniProtKB-UniRule"/>
</dbReference>
<dbReference type="GO" id="GO:0032259">
    <property type="term" value="P:methylation"/>
    <property type="evidence" value="ECO:0007669"/>
    <property type="project" value="UniProtKB-KW"/>
</dbReference>
<dbReference type="GO" id="GO:0008033">
    <property type="term" value="P:tRNA processing"/>
    <property type="evidence" value="ECO:0007669"/>
    <property type="project" value="UniProtKB-UniRule"/>
</dbReference>
<dbReference type="CDD" id="cd02440">
    <property type="entry name" value="AdoMet_MTases"/>
    <property type="match status" value="1"/>
</dbReference>
<dbReference type="Gene3D" id="3.40.50.150">
    <property type="entry name" value="Vaccinia Virus protein VP39"/>
    <property type="match status" value="1"/>
</dbReference>
<dbReference type="HAMAP" id="MF_01872">
    <property type="entry name" value="tRNA_methyltr_YfiC"/>
    <property type="match status" value="1"/>
</dbReference>
<dbReference type="InterPro" id="IPR002052">
    <property type="entry name" value="DNA_methylase_N6_adenine_CS"/>
</dbReference>
<dbReference type="InterPro" id="IPR029063">
    <property type="entry name" value="SAM-dependent_MTases_sf"/>
</dbReference>
<dbReference type="InterPro" id="IPR007848">
    <property type="entry name" value="Small_mtfrase_dom"/>
</dbReference>
<dbReference type="InterPro" id="IPR050210">
    <property type="entry name" value="tRNA_Adenine-N(6)_MTase"/>
</dbReference>
<dbReference type="InterPro" id="IPR022882">
    <property type="entry name" value="tRNA_adenine-N6_MeTrfase"/>
</dbReference>
<dbReference type="NCBIfam" id="NF047853">
    <property type="entry name" value="tRm6a37MtseTrmN"/>
    <property type="match status" value="1"/>
</dbReference>
<dbReference type="PANTHER" id="PTHR47739">
    <property type="entry name" value="TRNA1(VAL) (ADENINE(37)-N6)-METHYLTRANSFERASE"/>
    <property type="match status" value="1"/>
</dbReference>
<dbReference type="PANTHER" id="PTHR47739:SF1">
    <property type="entry name" value="TRNA1(VAL) (ADENINE(37)-N6)-METHYLTRANSFERASE"/>
    <property type="match status" value="1"/>
</dbReference>
<dbReference type="Pfam" id="PF05175">
    <property type="entry name" value="MTS"/>
    <property type="match status" value="1"/>
</dbReference>
<dbReference type="SUPFAM" id="SSF53335">
    <property type="entry name" value="S-adenosyl-L-methionine-dependent methyltransferases"/>
    <property type="match status" value="1"/>
</dbReference>
<dbReference type="PROSITE" id="PS00092">
    <property type="entry name" value="N6_MTASE"/>
    <property type="match status" value="1"/>
</dbReference>
<name>TRMN6_SALPK</name>
<reference key="1">
    <citation type="journal article" date="2009" name="BMC Genomics">
        <title>Pseudogene accumulation in the evolutionary histories of Salmonella enterica serovars Paratyphi A and Typhi.</title>
        <authorList>
            <person name="Holt K.E."/>
            <person name="Thomson N.R."/>
            <person name="Wain J."/>
            <person name="Langridge G.C."/>
            <person name="Hasan R."/>
            <person name="Bhutta Z.A."/>
            <person name="Quail M.A."/>
            <person name="Norbertczak H."/>
            <person name="Walker D."/>
            <person name="Simmonds M."/>
            <person name="White B."/>
            <person name="Bason N."/>
            <person name="Mungall K."/>
            <person name="Dougan G."/>
            <person name="Parkhill J."/>
        </authorList>
    </citation>
    <scope>NUCLEOTIDE SEQUENCE [LARGE SCALE GENOMIC DNA]</scope>
    <source>
        <strain>AKU_12601</strain>
    </source>
</reference>
<comment type="function">
    <text evidence="1">Specifically methylates the adenine in position 37 of tRNA(1)(Val) (anticodon cmo5UAC).</text>
</comment>
<comment type="catalytic activity">
    <reaction evidence="1">
        <text>adenosine(37) in tRNA1(Val) + S-adenosyl-L-methionine = N(6)-methyladenosine(37) in tRNA1(Val) + S-adenosyl-L-homocysteine + H(+)</text>
        <dbReference type="Rhea" id="RHEA:43160"/>
        <dbReference type="Rhea" id="RHEA-COMP:10369"/>
        <dbReference type="Rhea" id="RHEA-COMP:10370"/>
        <dbReference type="ChEBI" id="CHEBI:15378"/>
        <dbReference type="ChEBI" id="CHEBI:57856"/>
        <dbReference type="ChEBI" id="CHEBI:59789"/>
        <dbReference type="ChEBI" id="CHEBI:74411"/>
        <dbReference type="ChEBI" id="CHEBI:74449"/>
        <dbReference type="EC" id="2.1.1.223"/>
    </reaction>
</comment>
<comment type="subcellular location">
    <subcellularLocation>
        <location evidence="1">Cytoplasm</location>
    </subcellularLocation>
</comment>
<comment type="similarity">
    <text evidence="1">Belongs to the methyltransferase superfamily. tRNA (adenine-N(6)-)-methyltransferase family.</text>
</comment>
<protein>
    <recommendedName>
        <fullName evidence="1">tRNA1(Val) (adenine(37)-N6)-methyltransferase</fullName>
        <ecNumber evidence="1">2.1.1.223</ecNumber>
    </recommendedName>
    <alternativeName>
        <fullName evidence="1">tRNA m6A37 methyltransferase</fullName>
    </alternativeName>
</protein>
<accession>B5BAS2</accession>
<sequence length="245" mass="27279">MSQSGSALRRNGFTFKQFFVAHDRCAMKVGTDGILLGAWAPVADVKRILDIGTGSGLLALMLAQRTDDNVPIDAVELDAGAAMQAQENVAHSPWPHRITVHTDDIQRWAPRQTVRFDLIISNPPYYEPGVECATPQREQARYTATLDHQTLLAIAADCITEDGFFCVVLPEQIGNAFTQQALNMGWHLRLRTDVAENEARLPHRVLLAFSPQAGECFSDRLVIRGSDQHYSESYTALTQAFYLFM</sequence>
<organism>
    <name type="scientific">Salmonella paratyphi A (strain AKU_12601)</name>
    <dbReference type="NCBI Taxonomy" id="554290"/>
    <lineage>
        <taxon>Bacteria</taxon>
        <taxon>Pseudomonadati</taxon>
        <taxon>Pseudomonadota</taxon>
        <taxon>Gammaproteobacteria</taxon>
        <taxon>Enterobacterales</taxon>
        <taxon>Enterobacteriaceae</taxon>
        <taxon>Salmonella</taxon>
    </lineage>
</organism>
<evidence type="ECO:0000255" key="1">
    <source>
        <dbReference type="HAMAP-Rule" id="MF_01872"/>
    </source>
</evidence>
<keyword id="KW-0963">Cytoplasm</keyword>
<keyword id="KW-0489">Methyltransferase</keyword>
<keyword id="KW-0949">S-adenosyl-L-methionine</keyword>
<keyword id="KW-0808">Transferase</keyword>
<keyword id="KW-0819">tRNA processing</keyword>
<proteinExistence type="inferred from homology"/>
<gene>
    <name evidence="1" type="primary">yfiC</name>
    <name type="ordered locus">SSPA0261</name>
</gene>